<name>RNP4_METVS</name>
<accession>A6UNQ2</accession>
<evidence type="ECO:0000255" key="1">
    <source>
        <dbReference type="HAMAP-Rule" id="MF_00757"/>
    </source>
</evidence>
<keyword id="KW-0963">Cytoplasm</keyword>
<keyword id="KW-0255">Endonuclease</keyword>
<keyword id="KW-0378">Hydrolase</keyword>
<keyword id="KW-0479">Metal-binding</keyword>
<keyword id="KW-0540">Nuclease</keyword>
<keyword id="KW-0819">tRNA processing</keyword>
<keyword id="KW-0862">Zinc</keyword>
<reference key="1">
    <citation type="submission" date="2007-06" db="EMBL/GenBank/DDBJ databases">
        <title>Complete sequence of Methanococcus vannielii SB.</title>
        <authorList>
            <consortium name="US DOE Joint Genome Institute"/>
            <person name="Copeland A."/>
            <person name="Lucas S."/>
            <person name="Lapidus A."/>
            <person name="Barry K."/>
            <person name="Glavina del Rio T."/>
            <person name="Dalin E."/>
            <person name="Tice H."/>
            <person name="Pitluck S."/>
            <person name="Chain P."/>
            <person name="Malfatti S."/>
            <person name="Shin M."/>
            <person name="Vergez L."/>
            <person name="Schmutz J."/>
            <person name="Larimer F."/>
            <person name="Land M."/>
            <person name="Hauser L."/>
            <person name="Kyrpides N."/>
            <person name="Anderson I."/>
            <person name="Sieprawska-Lupa M."/>
            <person name="Whitman W.B."/>
            <person name="Richardson P."/>
        </authorList>
    </citation>
    <scope>NUCLEOTIDE SEQUENCE [LARGE SCALE GENOMIC DNA]</scope>
    <source>
        <strain>ATCC 35089 / DSM 1224 / JCM 13029 / OCM 148 / SB</strain>
    </source>
</reference>
<proteinExistence type="inferred from homology"/>
<organism>
    <name type="scientific">Methanococcus vannielii (strain ATCC 35089 / DSM 1224 / JCM 13029 / OCM 148 / SB)</name>
    <dbReference type="NCBI Taxonomy" id="406327"/>
    <lineage>
        <taxon>Archaea</taxon>
        <taxon>Methanobacteriati</taxon>
        <taxon>Methanobacteriota</taxon>
        <taxon>Methanomada group</taxon>
        <taxon>Methanococci</taxon>
        <taxon>Methanococcales</taxon>
        <taxon>Methanococcaceae</taxon>
        <taxon>Methanococcus</taxon>
    </lineage>
</organism>
<comment type="function">
    <text evidence="1">Part of ribonuclease P, a protein complex that generates mature tRNA molecules by cleaving their 5'-ends.</text>
</comment>
<comment type="catalytic activity">
    <reaction evidence="1">
        <text>Endonucleolytic cleavage of RNA, removing 5'-extranucleotides from tRNA precursor.</text>
        <dbReference type="EC" id="3.1.26.5"/>
    </reaction>
</comment>
<comment type="cofactor">
    <cofactor evidence="1">
        <name>Zn(2+)</name>
        <dbReference type="ChEBI" id="CHEBI:29105"/>
    </cofactor>
    <text evidence="1">Binds 1 zinc ion per subunit.</text>
</comment>
<comment type="subunit">
    <text evidence="1">Consists of a catalytic RNA component and at least 4-5 protein subunits.</text>
</comment>
<comment type="subcellular location">
    <subcellularLocation>
        <location evidence="1">Cytoplasm</location>
    </subcellularLocation>
</comment>
<comment type="similarity">
    <text evidence="1">Belongs to the eukaryotic/archaeal RNase P protein component 4 family.</text>
</comment>
<sequence length="109" mass="13125">MKLKKKFLEKSKNIANERIDILMNFAQKELRCEKKERSKNYVLLSKKIAMRMRMPFPKEWRRRICKNCGSFLIYGKNSSVRIKSKNYSHVVITCLECKHIFRIPIKKSK</sequence>
<dbReference type="EC" id="3.1.26.5" evidence="1"/>
<dbReference type="EMBL" id="CP000742">
    <property type="protein sequence ID" value="ABR54124.1"/>
    <property type="molecule type" value="Genomic_DNA"/>
</dbReference>
<dbReference type="RefSeq" id="WP_011972028.1">
    <property type="nucleotide sequence ID" value="NC_009634.1"/>
</dbReference>
<dbReference type="SMR" id="A6UNQ2"/>
<dbReference type="STRING" id="406327.Mevan_0214"/>
<dbReference type="GeneID" id="5325015"/>
<dbReference type="KEGG" id="mvn:Mevan_0214"/>
<dbReference type="eggNOG" id="arCOG04345">
    <property type="taxonomic scope" value="Archaea"/>
</dbReference>
<dbReference type="HOGENOM" id="CLU_079140_3_0_2"/>
<dbReference type="OrthoDB" id="10058at2157"/>
<dbReference type="Proteomes" id="UP000001107">
    <property type="component" value="Chromosome"/>
</dbReference>
<dbReference type="GO" id="GO:0005737">
    <property type="term" value="C:cytoplasm"/>
    <property type="evidence" value="ECO:0007669"/>
    <property type="project" value="UniProtKB-SubCell"/>
</dbReference>
<dbReference type="GO" id="GO:0030677">
    <property type="term" value="C:ribonuclease P complex"/>
    <property type="evidence" value="ECO:0007669"/>
    <property type="project" value="UniProtKB-UniRule"/>
</dbReference>
<dbReference type="GO" id="GO:0004526">
    <property type="term" value="F:ribonuclease P activity"/>
    <property type="evidence" value="ECO:0007669"/>
    <property type="project" value="UniProtKB-UniRule"/>
</dbReference>
<dbReference type="GO" id="GO:0008270">
    <property type="term" value="F:zinc ion binding"/>
    <property type="evidence" value="ECO:0007669"/>
    <property type="project" value="UniProtKB-UniRule"/>
</dbReference>
<dbReference type="GO" id="GO:0001682">
    <property type="term" value="P:tRNA 5'-leader removal"/>
    <property type="evidence" value="ECO:0007669"/>
    <property type="project" value="UniProtKB-UniRule"/>
</dbReference>
<dbReference type="Gene3D" id="6.20.50.20">
    <property type="match status" value="1"/>
</dbReference>
<dbReference type="Gene3D" id="1.20.5.420">
    <property type="entry name" value="Immunoglobulin FC, subunit C"/>
    <property type="match status" value="1"/>
</dbReference>
<dbReference type="HAMAP" id="MF_00757">
    <property type="entry name" value="RNase_P_4"/>
    <property type="match status" value="1"/>
</dbReference>
<dbReference type="InterPro" id="IPR016432">
    <property type="entry name" value="RNP4"/>
</dbReference>
<dbReference type="InterPro" id="IPR007175">
    <property type="entry name" value="Rpr2/Snm1/Rpp21"/>
</dbReference>
<dbReference type="PANTHER" id="PTHR14742:SF0">
    <property type="entry name" value="RIBONUCLEASE P PROTEIN SUBUNIT P21"/>
    <property type="match status" value="1"/>
</dbReference>
<dbReference type="PANTHER" id="PTHR14742">
    <property type="entry name" value="RIBONUCLEASE P SUBUNIT P21"/>
    <property type="match status" value="1"/>
</dbReference>
<dbReference type="Pfam" id="PF04032">
    <property type="entry name" value="Rpr2"/>
    <property type="match status" value="1"/>
</dbReference>
<dbReference type="PIRSF" id="PIRSF004878">
    <property type="entry name" value="RNase_P_4"/>
    <property type="match status" value="1"/>
</dbReference>
<feature type="chain" id="PRO_1000046635" description="Ribonuclease P protein component 4">
    <location>
        <begin position="1"/>
        <end position="109"/>
    </location>
</feature>
<feature type="binding site" evidence="1">
    <location>
        <position position="65"/>
    </location>
    <ligand>
        <name>Zn(2+)</name>
        <dbReference type="ChEBI" id="CHEBI:29105"/>
    </ligand>
</feature>
<feature type="binding site" evidence="1">
    <location>
        <position position="68"/>
    </location>
    <ligand>
        <name>Zn(2+)</name>
        <dbReference type="ChEBI" id="CHEBI:29105"/>
    </ligand>
</feature>
<feature type="binding site" evidence="1">
    <location>
        <position position="94"/>
    </location>
    <ligand>
        <name>Zn(2+)</name>
        <dbReference type="ChEBI" id="CHEBI:29105"/>
    </ligand>
</feature>
<feature type="binding site" evidence="1">
    <location>
        <position position="97"/>
    </location>
    <ligand>
        <name>Zn(2+)</name>
        <dbReference type="ChEBI" id="CHEBI:29105"/>
    </ligand>
</feature>
<protein>
    <recommendedName>
        <fullName evidence="1">Ribonuclease P protein component 4</fullName>
        <shortName evidence="1">RNase P component 4</shortName>
        <ecNumber evidence="1">3.1.26.5</ecNumber>
    </recommendedName>
    <alternativeName>
        <fullName evidence="1">Rpp21</fullName>
    </alternativeName>
</protein>
<gene>
    <name evidence="1" type="primary">rnp4</name>
    <name type="ordered locus">Mevan_0214</name>
</gene>